<dbReference type="EC" id="4.2.1.126" evidence="1"/>
<dbReference type="EMBL" id="CP000901">
    <property type="protein sequence ID" value="ABX87625.1"/>
    <property type="molecule type" value="Genomic_DNA"/>
</dbReference>
<dbReference type="RefSeq" id="WP_002211565.1">
    <property type="nucleotide sequence ID" value="NZ_CP009935.1"/>
</dbReference>
<dbReference type="SMR" id="A9R410"/>
<dbReference type="GeneID" id="57975879"/>
<dbReference type="KEGG" id="ypg:YpAngola_A3619"/>
<dbReference type="PATRIC" id="fig|349746.12.peg.319"/>
<dbReference type="UniPathway" id="UPA00342"/>
<dbReference type="UniPathway" id="UPA00343"/>
<dbReference type="UniPathway" id="UPA00544"/>
<dbReference type="GO" id="GO:0097367">
    <property type="term" value="F:carbohydrate derivative binding"/>
    <property type="evidence" value="ECO:0007669"/>
    <property type="project" value="InterPro"/>
</dbReference>
<dbReference type="GO" id="GO:0016835">
    <property type="term" value="F:carbon-oxygen lyase activity"/>
    <property type="evidence" value="ECO:0007669"/>
    <property type="project" value="UniProtKB-UniRule"/>
</dbReference>
<dbReference type="GO" id="GO:0016803">
    <property type="term" value="F:ether hydrolase activity"/>
    <property type="evidence" value="ECO:0007669"/>
    <property type="project" value="TreeGrafter"/>
</dbReference>
<dbReference type="GO" id="GO:0097175">
    <property type="term" value="P:1,6-anhydro-N-acetyl-beta-muramic acid catabolic process"/>
    <property type="evidence" value="ECO:0007669"/>
    <property type="project" value="UniProtKB-UniRule"/>
</dbReference>
<dbReference type="GO" id="GO:0046348">
    <property type="term" value="P:amino sugar catabolic process"/>
    <property type="evidence" value="ECO:0007669"/>
    <property type="project" value="InterPro"/>
</dbReference>
<dbReference type="GO" id="GO:0097173">
    <property type="term" value="P:N-acetylmuramic acid catabolic process"/>
    <property type="evidence" value="ECO:0007669"/>
    <property type="project" value="UniProtKB-UniPathway"/>
</dbReference>
<dbReference type="GO" id="GO:0009254">
    <property type="term" value="P:peptidoglycan turnover"/>
    <property type="evidence" value="ECO:0007669"/>
    <property type="project" value="UniProtKB-UniRule"/>
</dbReference>
<dbReference type="CDD" id="cd05007">
    <property type="entry name" value="SIS_Etherase"/>
    <property type="match status" value="1"/>
</dbReference>
<dbReference type="FunFam" id="1.10.8.1080:FF:000001">
    <property type="entry name" value="N-acetylmuramic acid 6-phosphate etherase"/>
    <property type="match status" value="1"/>
</dbReference>
<dbReference type="FunFam" id="3.40.50.10490:FF:000014">
    <property type="entry name" value="N-acetylmuramic acid 6-phosphate etherase"/>
    <property type="match status" value="1"/>
</dbReference>
<dbReference type="Gene3D" id="1.10.8.1080">
    <property type="match status" value="1"/>
</dbReference>
<dbReference type="Gene3D" id="3.40.50.10490">
    <property type="entry name" value="Glucose-6-phosphate isomerase like protein, domain 1"/>
    <property type="match status" value="1"/>
</dbReference>
<dbReference type="HAMAP" id="MF_00068">
    <property type="entry name" value="MurQ"/>
    <property type="match status" value="1"/>
</dbReference>
<dbReference type="InterPro" id="IPR005488">
    <property type="entry name" value="Etherase_MurQ"/>
</dbReference>
<dbReference type="InterPro" id="IPR005486">
    <property type="entry name" value="Glucokinase_regulatory_CS"/>
</dbReference>
<dbReference type="InterPro" id="IPR040190">
    <property type="entry name" value="MURQ/GCKR"/>
</dbReference>
<dbReference type="InterPro" id="IPR001347">
    <property type="entry name" value="SIS_dom"/>
</dbReference>
<dbReference type="InterPro" id="IPR046348">
    <property type="entry name" value="SIS_dom_sf"/>
</dbReference>
<dbReference type="InterPro" id="IPR009060">
    <property type="entry name" value="UBA-like_sf"/>
</dbReference>
<dbReference type="NCBIfam" id="TIGR00274">
    <property type="entry name" value="N-acetylmuramic acid 6-phosphate etherase"/>
    <property type="match status" value="1"/>
</dbReference>
<dbReference type="NCBIfam" id="NF003915">
    <property type="entry name" value="PRK05441.1"/>
    <property type="match status" value="1"/>
</dbReference>
<dbReference type="NCBIfam" id="NF009222">
    <property type="entry name" value="PRK12570.1"/>
    <property type="match status" value="1"/>
</dbReference>
<dbReference type="PANTHER" id="PTHR10088">
    <property type="entry name" value="GLUCOKINASE REGULATORY PROTEIN"/>
    <property type="match status" value="1"/>
</dbReference>
<dbReference type="PANTHER" id="PTHR10088:SF5">
    <property type="entry name" value="N-ACETYLMURAMIC ACID 6-PHOSPHATE ETHERASE"/>
    <property type="match status" value="1"/>
</dbReference>
<dbReference type="Pfam" id="PF20741">
    <property type="entry name" value="GKRP-like_C"/>
    <property type="match status" value="1"/>
</dbReference>
<dbReference type="Pfam" id="PF22645">
    <property type="entry name" value="GKRP_SIS_N"/>
    <property type="match status" value="1"/>
</dbReference>
<dbReference type="SUPFAM" id="SSF53697">
    <property type="entry name" value="SIS domain"/>
    <property type="match status" value="1"/>
</dbReference>
<dbReference type="SUPFAM" id="SSF46934">
    <property type="entry name" value="UBA-like"/>
    <property type="match status" value="1"/>
</dbReference>
<dbReference type="PROSITE" id="PS01272">
    <property type="entry name" value="GCKR"/>
    <property type="match status" value="1"/>
</dbReference>
<dbReference type="PROSITE" id="PS51464">
    <property type="entry name" value="SIS"/>
    <property type="match status" value="1"/>
</dbReference>
<evidence type="ECO:0000255" key="1">
    <source>
        <dbReference type="HAMAP-Rule" id="MF_00068"/>
    </source>
</evidence>
<proteinExistence type="inferred from homology"/>
<feature type="chain" id="PRO_1000092324" description="N-acetylmuramic acid 6-phosphate etherase">
    <location>
        <begin position="1"/>
        <end position="295"/>
    </location>
</feature>
<feature type="domain" description="SIS" evidence="1">
    <location>
        <begin position="55"/>
        <end position="218"/>
    </location>
</feature>
<feature type="active site" description="Proton donor" evidence="1">
    <location>
        <position position="83"/>
    </location>
</feature>
<feature type="active site" evidence="1">
    <location>
        <position position="114"/>
    </location>
</feature>
<comment type="function">
    <text evidence="1">Specifically catalyzes the cleavage of the D-lactyl ether substituent of MurNAc 6-phosphate, producing GlcNAc 6-phosphate and D-lactate. Together with AnmK, is also required for the utilization of anhydro-N-acetylmuramic acid (anhMurNAc) either imported from the medium or derived from its own cell wall murein, and thus plays a role in cell wall recycling.</text>
</comment>
<comment type="catalytic activity">
    <reaction evidence="1">
        <text>N-acetyl-D-muramate 6-phosphate + H2O = N-acetyl-D-glucosamine 6-phosphate + (R)-lactate</text>
        <dbReference type="Rhea" id="RHEA:26410"/>
        <dbReference type="ChEBI" id="CHEBI:15377"/>
        <dbReference type="ChEBI" id="CHEBI:16004"/>
        <dbReference type="ChEBI" id="CHEBI:57513"/>
        <dbReference type="ChEBI" id="CHEBI:58722"/>
        <dbReference type="EC" id="4.2.1.126"/>
    </reaction>
</comment>
<comment type="pathway">
    <text evidence="1">Amino-sugar metabolism; 1,6-anhydro-N-acetylmuramate degradation.</text>
</comment>
<comment type="pathway">
    <text evidence="1">Amino-sugar metabolism; N-acetylmuramate degradation.</text>
</comment>
<comment type="pathway">
    <text evidence="1">Cell wall biogenesis; peptidoglycan recycling.</text>
</comment>
<comment type="subunit">
    <text evidence="1">Homodimer.</text>
</comment>
<comment type="induction">
    <text evidence="1">Induced by MurNAc 6-phosphate that releases the repressor MurR from the DNA. Repressed by MurR in the absence of MurNAc 6-phosphate.</text>
</comment>
<comment type="miscellaneous">
    <text evidence="1">A lyase-type mechanism (elimination/hydration) is suggested for the cleavage of the lactyl ether bond of MurNAc 6-phosphate, with the formation of an alpha,beta-unsaturated aldehyde intermediate with (E)-stereochemistry, followed by the syn addition of water to give product.</text>
</comment>
<comment type="similarity">
    <text evidence="1">Belongs to the GCKR-like family. MurNAc-6-P etherase subfamily.</text>
</comment>
<keyword id="KW-0119">Carbohydrate metabolism</keyword>
<keyword id="KW-0456">Lyase</keyword>
<protein>
    <recommendedName>
        <fullName evidence="1">N-acetylmuramic acid 6-phosphate etherase</fullName>
        <shortName evidence="1">MurNAc-6-P etherase</shortName>
        <ecNumber evidence="1">4.2.1.126</ecNumber>
    </recommendedName>
    <alternativeName>
        <fullName evidence="1">N-acetylmuramic acid 6-phosphate hydrolase</fullName>
    </alternativeName>
    <alternativeName>
        <fullName evidence="1">N-acetylmuramic acid 6-phosphate lyase</fullName>
    </alternativeName>
</protein>
<sequence>MSLGALISESRNPATMELDKLSTLAMLTCINDEDRKVPDAIRLVLPAVAQAVDLAADALKQGGRLIYLGAGTSGRLGVLDASECPPTFGVPHGMVIGLIAGGPGALLKAVEGAEDDIALGMRDLQDLQLTATDMVVGLAASGRTPYVIGALRYARELGCPTAAISCNPDSPIAQEAQVAISPVVGPEALTGSTRMKSGTAQKLVLNMLSTGAMVKLGKVYQNLMVDVKATNVKLVDRACRIVVEATGVSRAEAEHALRQTDFEVKPAILMLLKGVSAEQARQDLRQHHGYLRAAL</sequence>
<reference key="1">
    <citation type="journal article" date="2010" name="J. Bacteriol.">
        <title>Genome sequence of the deep-rooted Yersinia pestis strain Angola reveals new insights into the evolution and pangenome of the plague bacterium.</title>
        <authorList>
            <person name="Eppinger M."/>
            <person name="Worsham P.L."/>
            <person name="Nikolich M.P."/>
            <person name="Riley D.R."/>
            <person name="Sebastian Y."/>
            <person name="Mou S."/>
            <person name="Achtman M."/>
            <person name="Lindler L.E."/>
            <person name="Ravel J."/>
        </authorList>
    </citation>
    <scope>NUCLEOTIDE SEQUENCE [LARGE SCALE GENOMIC DNA]</scope>
    <source>
        <strain>Angola</strain>
    </source>
</reference>
<name>MURQ_YERPG</name>
<organism>
    <name type="scientific">Yersinia pestis bv. Antiqua (strain Angola)</name>
    <dbReference type="NCBI Taxonomy" id="349746"/>
    <lineage>
        <taxon>Bacteria</taxon>
        <taxon>Pseudomonadati</taxon>
        <taxon>Pseudomonadota</taxon>
        <taxon>Gammaproteobacteria</taxon>
        <taxon>Enterobacterales</taxon>
        <taxon>Yersiniaceae</taxon>
        <taxon>Yersinia</taxon>
    </lineage>
</organism>
<gene>
    <name evidence="1" type="primary">murQ</name>
    <name type="ordered locus">YpAngola_A3619</name>
</gene>
<accession>A9R410</accession>